<reference key="1">
    <citation type="journal article" date="2008" name="Environ. Microbiol.">
        <title>The genome of Erwinia tasmaniensis strain Et1/99, a non-pathogenic bacterium in the genus Erwinia.</title>
        <authorList>
            <person name="Kube M."/>
            <person name="Migdoll A.M."/>
            <person name="Mueller I."/>
            <person name="Kuhl H."/>
            <person name="Beck A."/>
            <person name="Reinhardt R."/>
            <person name="Geider K."/>
        </authorList>
    </citation>
    <scope>NUCLEOTIDE SEQUENCE [LARGE SCALE GENOMIC DNA]</scope>
    <source>
        <strain>DSM 17950 / CFBP 7177 / CIP 109463 / NCPPB 4357 / Et1/99</strain>
    </source>
</reference>
<accession>B2VCE7</accession>
<comment type="function">
    <text evidence="1">Exhibits a very high intrinsic GTPase hydrolysis rate. Involved in the addition of a carboxymethylaminomethyl (cmnm) group at the wobble position (U34) of certain tRNAs, forming tRNA-cmnm(5)s(2)U34.</text>
</comment>
<comment type="cofactor">
    <cofactor evidence="1">
        <name>K(+)</name>
        <dbReference type="ChEBI" id="CHEBI:29103"/>
    </cofactor>
    <text evidence="1">Binds 1 potassium ion per subunit.</text>
</comment>
<comment type="subunit">
    <text evidence="1">Homodimer. Heterotetramer of two MnmE and two MnmG subunits.</text>
</comment>
<comment type="subcellular location">
    <subcellularLocation>
        <location evidence="1">Cytoplasm</location>
    </subcellularLocation>
</comment>
<comment type="similarity">
    <text evidence="1">Belongs to the TRAFAC class TrmE-Era-EngA-EngB-Septin-like GTPase superfamily. TrmE GTPase family.</text>
</comment>
<dbReference type="EC" id="3.6.-.-" evidence="1"/>
<dbReference type="EMBL" id="CU468135">
    <property type="protein sequence ID" value="CAO98503.1"/>
    <property type="molecule type" value="Genomic_DNA"/>
</dbReference>
<dbReference type="RefSeq" id="WP_012443124.1">
    <property type="nucleotide sequence ID" value="NC_010694.1"/>
</dbReference>
<dbReference type="SMR" id="B2VCE7"/>
<dbReference type="STRING" id="465817.ETA_34570"/>
<dbReference type="KEGG" id="eta:ETA_34570"/>
<dbReference type="eggNOG" id="COG0486">
    <property type="taxonomic scope" value="Bacteria"/>
</dbReference>
<dbReference type="HOGENOM" id="CLU_019624_4_1_6"/>
<dbReference type="OrthoDB" id="9805918at2"/>
<dbReference type="Proteomes" id="UP000001726">
    <property type="component" value="Chromosome"/>
</dbReference>
<dbReference type="GO" id="GO:0005829">
    <property type="term" value="C:cytosol"/>
    <property type="evidence" value="ECO:0007669"/>
    <property type="project" value="TreeGrafter"/>
</dbReference>
<dbReference type="GO" id="GO:0005525">
    <property type="term" value="F:GTP binding"/>
    <property type="evidence" value="ECO:0007669"/>
    <property type="project" value="UniProtKB-UniRule"/>
</dbReference>
<dbReference type="GO" id="GO:0003924">
    <property type="term" value="F:GTPase activity"/>
    <property type="evidence" value="ECO:0007669"/>
    <property type="project" value="UniProtKB-UniRule"/>
</dbReference>
<dbReference type="GO" id="GO:0046872">
    <property type="term" value="F:metal ion binding"/>
    <property type="evidence" value="ECO:0007669"/>
    <property type="project" value="UniProtKB-KW"/>
</dbReference>
<dbReference type="GO" id="GO:0030488">
    <property type="term" value="P:tRNA methylation"/>
    <property type="evidence" value="ECO:0007669"/>
    <property type="project" value="TreeGrafter"/>
</dbReference>
<dbReference type="GO" id="GO:0002098">
    <property type="term" value="P:tRNA wobble uridine modification"/>
    <property type="evidence" value="ECO:0007669"/>
    <property type="project" value="TreeGrafter"/>
</dbReference>
<dbReference type="CDD" id="cd04164">
    <property type="entry name" value="trmE"/>
    <property type="match status" value="1"/>
</dbReference>
<dbReference type="CDD" id="cd14858">
    <property type="entry name" value="TrmE_N"/>
    <property type="match status" value="1"/>
</dbReference>
<dbReference type="FunFam" id="3.30.1360.120:FF:000001">
    <property type="entry name" value="tRNA modification GTPase MnmE"/>
    <property type="match status" value="1"/>
</dbReference>
<dbReference type="FunFam" id="3.40.50.300:FF:000249">
    <property type="entry name" value="tRNA modification GTPase MnmE"/>
    <property type="match status" value="1"/>
</dbReference>
<dbReference type="Gene3D" id="3.40.50.300">
    <property type="entry name" value="P-loop containing nucleotide triphosphate hydrolases"/>
    <property type="match status" value="1"/>
</dbReference>
<dbReference type="Gene3D" id="3.30.1360.120">
    <property type="entry name" value="Probable tRNA modification gtpase trme, domain 1"/>
    <property type="match status" value="1"/>
</dbReference>
<dbReference type="Gene3D" id="1.20.120.430">
    <property type="entry name" value="tRNA modification GTPase MnmE domain 2"/>
    <property type="match status" value="1"/>
</dbReference>
<dbReference type="HAMAP" id="MF_00379">
    <property type="entry name" value="GTPase_MnmE"/>
    <property type="match status" value="1"/>
</dbReference>
<dbReference type="InterPro" id="IPR031168">
    <property type="entry name" value="G_TrmE"/>
</dbReference>
<dbReference type="InterPro" id="IPR006073">
    <property type="entry name" value="GTP-bd"/>
</dbReference>
<dbReference type="InterPro" id="IPR018948">
    <property type="entry name" value="GTP-bd_TrmE_N"/>
</dbReference>
<dbReference type="InterPro" id="IPR004520">
    <property type="entry name" value="GTPase_MnmE"/>
</dbReference>
<dbReference type="InterPro" id="IPR027368">
    <property type="entry name" value="MnmE_dom2"/>
</dbReference>
<dbReference type="InterPro" id="IPR025867">
    <property type="entry name" value="MnmE_helical"/>
</dbReference>
<dbReference type="InterPro" id="IPR027417">
    <property type="entry name" value="P-loop_NTPase"/>
</dbReference>
<dbReference type="InterPro" id="IPR005225">
    <property type="entry name" value="Small_GTP-bd"/>
</dbReference>
<dbReference type="InterPro" id="IPR027266">
    <property type="entry name" value="TrmE/GcvT_dom1"/>
</dbReference>
<dbReference type="NCBIfam" id="TIGR00450">
    <property type="entry name" value="mnmE_trmE_thdF"/>
    <property type="match status" value="1"/>
</dbReference>
<dbReference type="NCBIfam" id="NF003661">
    <property type="entry name" value="PRK05291.1-3"/>
    <property type="match status" value="1"/>
</dbReference>
<dbReference type="NCBIfam" id="TIGR00231">
    <property type="entry name" value="small_GTP"/>
    <property type="match status" value="1"/>
</dbReference>
<dbReference type="PANTHER" id="PTHR42714">
    <property type="entry name" value="TRNA MODIFICATION GTPASE GTPBP3"/>
    <property type="match status" value="1"/>
</dbReference>
<dbReference type="PANTHER" id="PTHR42714:SF2">
    <property type="entry name" value="TRNA MODIFICATION GTPASE GTPBP3, MITOCHONDRIAL"/>
    <property type="match status" value="1"/>
</dbReference>
<dbReference type="Pfam" id="PF01926">
    <property type="entry name" value="MMR_HSR1"/>
    <property type="match status" value="1"/>
</dbReference>
<dbReference type="Pfam" id="PF12631">
    <property type="entry name" value="MnmE_helical"/>
    <property type="match status" value="1"/>
</dbReference>
<dbReference type="Pfam" id="PF10396">
    <property type="entry name" value="TrmE_N"/>
    <property type="match status" value="1"/>
</dbReference>
<dbReference type="SUPFAM" id="SSF52540">
    <property type="entry name" value="P-loop containing nucleoside triphosphate hydrolases"/>
    <property type="match status" value="1"/>
</dbReference>
<dbReference type="SUPFAM" id="SSF116878">
    <property type="entry name" value="TrmE connector domain"/>
    <property type="match status" value="1"/>
</dbReference>
<dbReference type="PROSITE" id="PS51709">
    <property type="entry name" value="G_TRME"/>
    <property type="match status" value="1"/>
</dbReference>
<proteinExistence type="inferred from homology"/>
<gene>
    <name evidence="1" type="primary">mnmE</name>
    <name evidence="1" type="synonym">trmE</name>
    <name type="ordered locus">ETA_34570</name>
</gene>
<sequence length="454" mass="49277">MNHSDTIVAQATPPGRGGVGILRVSGSKAAEVAQLLLGKLPKPRYADYLPFRDADGSTLDQGIALWFPGPNSFTGEDVLEFQGHGGPVILDLLLKRILSLPGLRIANPGEFSERAFLNDKLDLAQAEAIADLIDASSEQAARSAVNSLQGVFSTRVNHLVEALTHLRIYVEAAIDFPDEEIDFLSDGKIEAQLHQVIHNLAEVRSEARQGSLLREGMKVVIAGRPNAGKSSLLNALAGREAAIVTDIAGTTRDVLREHIHIDGMPLHIIDTAGLREASDEVERIGIERAWHEIEQADHVLFMVDGTTTEATNPAEIWPDFIARLPESLPVTVVRNKADITGETRGVEEVNGHSLIRLSARTGEGIENLRDHLKSSMGFSGNMEGGFLARRRHLQALELAATHLEQGKHQLLAAWAGELLAEELRLAQQALSEITGEFSSDDLLGRIFSSFCIGK</sequence>
<keyword id="KW-0963">Cytoplasm</keyword>
<keyword id="KW-0342">GTP-binding</keyword>
<keyword id="KW-0378">Hydrolase</keyword>
<keyword id="KW-0460">Magnesium</keyword>
<keyword id="KW-0479">Metal-binding</keyword>
<keyword id="KW-0547">Nucleotide-binding</keyword>
<keyword id="KW-0630">Potassium</keyword>
<keyword id="KW-1185">Reference proteome</keyword>
<keyword id="KW-0819">tRNA processing</keyword>
<name>MNME_ERWT9</name>
<organism>
    <name type="scientific">Erwinia tasmaniensis (strain DSM 17950 / CFBP 7177 / CIP 109463 / NCPPB 4357 / Et1/99)</name>
    <dbReference type="NCBI Taxonomy" id="465817"/>
    <lineage>
        <taxon>Bacteria</taxon>
        <taxon>Pseudomonadati</taxon>
        <taxon>Pseudomonadota</taxon>
        <taxon>Gammaproteobacteria</taxon>
        <taxon>Enterobacterales</taxon>
        <taxon>Erwiniaceae</taxon>
        <taxon>Erwinia</taxon>
    </lineage>
</organism>
<feature type="chain" id="PRO_1000197043" description="tRNA modification GTPase MnmE">
    <location>
        <begin position="1"/>
        <end position="454"/>
    </location>
</feature>
<feature type="domain" description="TrmE-type G">
    <location>
        <begin position="216"/>
        <end position="377"/>
    </location>
</feature>
<feature type="binding site" evidence="1">
    <location>
        <position position="23"/>
    </location>
    <ligand>
        <name>(6S)-5-formyl-5,6,7,8-tetrahydrofolate</name>
        <dbReference type="ChEBI" id="CHEBI:57457"/>
    </ligand>
</feature>
<feature type="binding site" evidence="1">
    <location>
        <position position="80"/>
    </location>
    <ligand>
        <name>(6S)-5-formyl-5,6,7,8-tetrahydrofolate</name>
        <dbReference type="ChEBI" id="CHEBI:57457"/>
    </ligand>
</feature>
<feature type="binding site" evidence="1">
    <location>
        <position position="120"/>
    </location>
    <ligand>
        <name>(6S)-5-formyl-5,6,7,8-tetrahydrofolate</name>
        <dbReference type="ChEBI" id="CHEBI:57457"/>
    </ligand>
</feature>
<feature type="binding site" evidence="1">
    <location>
        <begin position="226"/>
        <end position="231"/>
    </location>
    <ligand>
        <name>GTP</name>
        <dbReference type="ChEBI" id="CHEBI:37565"/>
    </ligand>
</feature>
<feature type="binding site" evidence="1">
    <location>
        <position position="226"/>
    </location>
    <ligand>
        <name>K(+)</name>
        <dbReference type="ChEBI" id="CHEBI:29103"/>
    </ligand>
</feature>
<feature type="binding site" evidence="1">
    <location>
        <position position="230"/>
    </location>
    <ligand>
        <name>Mg(2+)</name>
        <dbReference type="ChEBI" id="CHEBI:18420"/>
    </ligand>
</feature>
<feature type="binding site" evidence="1">
    <location>
        <begin position="245"/>
        <end position="251"/>
    </location>
    <ligand>
        <name>GTP</name>
        <dbReference type="ChEBI" id="CHEBI:37565"/>
    </ligand>
</feature>
<feature type="binding site" evidence="1">
    <location>
        <position position="245"/>
    </location>
    <ligand>
        <name>K(+)</name>
        <dbReference type="ChEBI" id="CHEBI:29103"/>
    </ligand>
</feature>
<feature type="binding site" evidence="1">
    <location>
        <position position="247"/>
    </location>
    <ligand>
        <name>K(+)</name>
        <dbReference type="ChEBI" id="CHEBI:29103"/>
    </ligand>
</feature>
<feature type="binding site" evidence="1">
    <location>
        <position position="250"/>
    </location>
    <ligand>
        <name>K(+)</name>
        <dbReference type="ChEBI" id="CHEBI:29103"/>
    </ligand>
</feature>
<feature type="binding site" evidence="1">
    <location>
        <position position="251"/>
    </location>
    <ligand>
        <name>Mg(2+)</name>
        <dbReference type="ChEBI" id="CHEBI:18420"/>
    </ligand>
</feature>
<feature type="binding site" evidence="1">
    <location>
        <begin position="270"/>
        <end position="273"/>
    </location>
    <ligand>
        <name>GTP</name>
        <dbReference type="ChEBI" id="CHEBI:37565"/>
    </ligand>
</feature>
<feature type="binding site" evidence="1">
    <location>
        <begin position="335"/>
        <end position="338"/>
    </location>
    <ligand>
        <name>GTP</name>
        <dbReference type="ChEBI" id="CHEBI:37565"/>
    </ligand>
</feature>
<feature type="binding site" evidence="1">
    <location>
        <begin position="358"/>
        <end position="360"/>
    </location>
    <ligand>
        <name>GTP</name>
        <dbReference type="ChEBI" id="CHEBI:37565"/>
    </ligand>
</feature>
<feature type="binding site" evidence="1">
    <location>
        <position position="454"/>
    </location>
    <ligand>
        <name>(6S)-5-formyl-5,6,7,8-tetrahydrofolate</name>
        <dbReference type="ChEBI" id="CHEBI:57457"/>
    </ligand>
</feature>
<protein>
    <recommendedName>
        <fullName evidence="1">tRNA modification GTPase MnmE</fullName>
        <ecNumber evidence="1">3.6.-.-</ecNumber>
    </recommendedName>
</protein>
<evidence type="ECO:0000255" key="1">
    <source>
        <dbReference type="HAMAP-Rule" id="MF_00379"/>
    </source>
</evidence>